<reference key="1">
    <citation type="journal article" date="1997" name="J. Biol. Chem.">
        <title>Neuronal pentraxin receptor, a novel putative integral membrane pentraxin that interacts with neuronal pentraxin 1 and 2 and taipoxin-associated calcium-binding protein 49.</title>
        <authorList>
            <person name="Dodds D.C."/>
            <person name="Omeis I.A."/>
            <person name="Cushman S.J."/>
            <person name="Helms J.A."/>
            <person name="Perin M.S."/>
        </authorList>
    </citation>
    <scope>NUCLEOTIDE SEQUENCE [MRNA]</scope>
    <scope>PARTIAL PROTEIN SEQUENCE</scope>
    <scope>SUBUNIT</scope>
    <source>
        <tissue>Brain</tissue>
    </source>
</reference>
<reference key="2">
    <citation type="journal article" date="2000" name="J. Biol. Chem.">
        <title>Biochemical interactions of the neuronal pentraxins. Neuronal pentraxin (NP) receptor binds to taipoxin and taipoxin-associated calcium-binding protein 49 via NP1 and NP2.</title>
        <authorList>
            <person name="Kirkpatrick L.L."/>
            <person name="Matzuk M.M."/>
            <person name="Dodds D.C."/>
            <person name="Perin M.S."/>
        </authorList>
    </citation>
    <scope>FUNCTION</scope>
    <scope>SUBUNIT</scope>
</reference>
<reference key="3">
    <citation type="journal article" date="2013" name="J. Proteome Res.">
        <title>Site-specific glycan-peptide analysis for determination of N-glycoproteome heterogeneity.</title>
        <authorList>
            <person name="Parker B.L."/>
            <person name="Thaysen-Andersen M."/>
            <person name="Solis N."/>
            <person name="Scott N.E."/>
            <person name="Larsen M.R."/>
            <person name="Graham M.E."/>
            <person name="Packer N.H."/>
            <person name="Cordwell S.J."/>
        </authorList>
    </citation>
    <scope>GLYCOSYLATION [LARGE SCALE ANALYSIS] AT ASN-211</scope>
    <scope>IDENTIFICATION BY MASS SPECTROMETRY [LARGE SCALE ANALYSIS]</scope>
    <source>
        <tissue>Brain</tissue>
    </source>
</reference>
<dbReference type="EMBL" id="AF005099">
    <property type="protein sequence ID" value="AAB62885.1"/>
    <property type="molecule type" value="mRNA"/>
</dbReference>
<dbReference type="SMR" id="O35764"/>
<dbReference type="CORUM" id="O35764"/>
<dbReference type="FunCoup" id="O35764">
    <property type="interactions" value="184"/>
</dbReference>
<dbReference type="STRING" id="10116.ENSRNOP00000004703"/>
<dbReference type="GlyCosmos" id="O35764">
    <property type="glycosylation" value="3 sites, 15 glycans"/>
</dbReference>
<dbReference type="GlyGen" id="O35764">
    <property type="glycosylation" value="3 sites, 15 N-linked glycans (1 site)"/>
</dbReference>
<dbReference type="iPTMnet" id="O35764"/>
<dbReference type="PhosphoSitePlus" id="O35764"/>
<dbReference type="jPOST" id="O35764"/>
<dbReference type="PaxDb" id="10116-ENSRNOP00000004703"/>
<dbReference type="UCSC" id="RGD:628898">
    <property type="organism name" value="rat"/>
</dbReference>
<dbReference type="AGR" id="RGD:628898"/>
<dbReference type="RGD" id="628898">
    <property type="gene designation" value="Nptxr"/>
</dbReference>
<dbReference type="eggNOG" id="ENOG502RCVB">
    <property type="taxonomic scope" value="Eukaryota"/>
</dbReference>
<dbReference type="InParanoid" id="O35764"/>
<dbReference type="PhylomeDB" id="O35764"/>
<dbReference type="PRO" id="PR:O35764"/>
<dbReference type="Proteomes" id="UP000002494">
    <property type="component" value="Unplaced"/>
</dbReference>
<dbReference type="GO" id="GO:0005615">
    <property type="term" value="C:extracellular space"/>
    <property type="evidence" value="ECO:0000314"/>
    <property type="project" value="RGD"/>
</dbReference>
<dbReference type="GO" id="GO:0098978">
    <property type="term" value="C:glutamatergic synapse"/>
    <property type="evidence" value="ECO:0000266"/>
    <property type="project" value="RGD"/>
</dbReference>
<dbReference type="GO" id="GO:0005886">
    <property type="term" value="C:plasma membrane"/>
    <property type="evidence" value="ECO:0000266"/>
    <property type="project" value="RGD"/>
</dbReference>
<dbReference type="GO" id="GO:0046872">
    <property type="term" value="F:metal ion binding"/>
    <property type="evidence" value="ECO:0007669"/>
    <property type="project" value="UniProtKB-KW"/>
</dbReference>
<dbReference type="GO" id="GO:0008029">
    <property type="term" value="F:pentraxin receptor activity"/>
    <property type="evidence" value="ECO:0000314"/>
    <property type="project" value="RGD"/>
</dbReference>
<dbReference type="GO" id="GO:0019903">
    <property type="term" value="F:protein phosphatase binding"/>
    <property type="evidence" value="ECO:0000266"/>
    <property type="project" value="RGD"/>
</dbReference>
<dbReference type="GO" id="GO:0044877">
    <property type="term" value="F:protein-containing complex binding"/>
    <property type="evidence" value="ECO:0000314"/>
    <property type="project" value="RGD"/>
</dbReference>
<dbReference type="GO" id="GO:0031175">
    <property type="term" value="P:neuron projection development"/>
    <property type="evidence" value="ECO:0000266"/>
    <property type="project" value="RGD"/>
</dbReference>
<dbReference type="GO" id="GO:0099645">
    <property type="term" value="P:neurotransmitter receptor localization to postsynaptic specialization membrane"/>
    <property type="evidence" value="ECO:0000266"/>
    <property type="project" value="RGD"/>
</dbReference>
<dbReference type="GO" id="GO:0099150">
    <property type="term" value="P:regulation of postsynaptic specialization assembly"/>
    <property type="evidence" value="ECO:0000266"/>
    <property type="project" value="RGD"/>
</dbReference>
<dbReference type="GO" id="GO:0042542">
    <property type="term" value="P:response to hydrogen peroxide"/>
    <property type="evidence" value="ECO:0000270"/>
    <property type="project" value="RGD"/>
</dbReference>
<dbReference type="CDD" id="cd00152">
    <property type="entry name" value="PTX"/>
    <property type="match status" value="1"/>
</dbReference>
<dbReference type="FunFam" id="2.60.120.200:FF:000012">
    <property type="entry name" value="neuronal pentraxin receptor"/>
    <property type="match status" value="1"/>
</dbReference>
<dbReference type="Gene3D" id="2.60.120.200">
    <property type="match status" value="1"/>
</dbReference>
<dbReference type="InterPro" id="IPR013320">
    <property type="entry name" value="ConA-like_dom_sf"/>
</dbReference>
<dbReference type="InterPro" id="IPR051360">
    <property type="entry name" value="Neuronal_Pentraxin_Related"/>
</dbReference>
<dbReference type="InterPro" id="IPR001759">
    <property type="entry name" value="Pentraxin-related"/>
</dbReference>
<dbReference type="PANTHER" id="PTHR19277:SF94">
    <property type="entry name" value="NEURONAL PENTRAXIN RECEPTOR"/>
    <property type="match status" value="1"/>
</dbReference>
<dbReference type="PANTHER" id="PTHR19277">
    <property type="entry name" value="PENTRAXIN"/>
    <property type="match status" value="1"/>
</dbReference>
<dbReference type="Pfam" id="PF00354">
    <property type="entry name" value="Pentaxin"/>
    <property type="match status" value="1"/>
</dbReference>
<dbReference type="PRINTS" id="PR00895">
    <property type="entry name" value="PENTAXIN"/>
</dbReference>
<dbReference type="SMART" id="SM00159">
    <property type="entry name" value="PTX"/>
    <property type="match status" value="1"/>
</dbReference>
<dbReference type="SUPFAM" id="SSF49899">
    <property type="entry name" value="Concanavalin A-like lectins/glucanases"/>
    <property type="match status" value="1"/>
</dbReference>
<dbReference type="PROSITE" id="PS51828">
    <property type="entry name" value="PTX_2"/>
    <property type="match status" value="1"/>
</dbReference>
<comment type="function">
    <text evidence="5">May be involved in mediating uptake of synaptic material during synapse remodeling or in mediating the synaptic clustering of AMPA glutamate receptors at a subset of excitatory synapses.</text>
</comment>
<comment type="cofactor">
    <cofactor evidence="1">
        <name>Ca(2+)</name>
        <dbReference type="ChEBI" id="CHEBI:29108"/>
    </cofactor>
    <text evidence="1">Binds 2 calcium ions per subunit.</text>
</comment>
<comment type="subunit">
    <text evidence="1 5 6">Interacts with KLHL2 (By similarity). Heteropentamer with NPTX1 and/or NPTX2. Also binds taipoxin-associated calcium-binding protein 49 (TCBP49/RCN2).</text>
</comment>
<comment type="subcellular location">
    <subcellularLocation>
        <location evidence="7">Membrane</location>
        <topology evidence="7">Single-pass type II membrane protein</topology>
    </subcellularLocation>
</comment>
<comment type="tissue specificity">
    <text>Brain specific.</text>
</comment>
<comment type="PTM">
    <text>N-glycosylated.</text>
</comment>
<comment type="PTM">
    <text evidence="1">Ubiquitinated by a cullin-RING-based BCR (BTB-CUL3-RBX1) E3 ubiquitin-protein ligase complex containing KLHL2.</text>
</comment>
<organism>
    <name type="scientific">Rattus norvegicus</name>
    <name type="common">Rat</name>
    <dbReference type="NCBI Taxonomy" id="10116"/>
    <lineage>
        <taxon>Eukaryota</taxon>
        <taxon>Metazoa</taxon>
        <taxon>Chordata</taxon>
        <taxon>Craniata</taxon>
        <taxon>Vertebrata</taxon>
        <taxon>Euteleostomi</taxon>
        <taxon>Mammalia</taxon>
        <taxon>Eutheria</taxon>
        <taxon>Euarchontoglires</taxon>
        <taxon>Glires</taxon>
        <taxon>Rodentia</taxon>
        <taxon>Myomorpha</taxon>
        <taxon>Muroidea</taxon>
        <taxon>Muridae</taxon>
        <taxon>Murinae</taxon>
        <taxon>Rattus</taxon>
    </lineage>
</organism>
<evidence type="ECO:0000250" key="1"/>
<evidence type="ECO:0000255" key="2"/>
<evidence type="ECO:0000255" key="3">
    <source>
        <dbReference type="PROSITE-ProRule" id="PRU01172"/>
    </source>
</evidence>
<evidence type="ECO:0000256" key="4">
    <source>
        <dbReference type="SAM" id="MobiDB-lite"/>
    </source>
</evidence>
<evidence type="ECO:0000269" key="5">
    <source>
    </source>
</evidence>
<evidence type="ECO:0000269" key="6">
    <source>
    </source>
</evidence>
<evidence type="ECO:0000305" key="7"/>
<evidence type="ECO:0007744" key="8">
    <source>
    </source>
</evidence>
<proteinExistence type="evidence at protein level"/>
<gene>
    <name type="primary">Nptxr</name>
    <name type="synonym">Npr</name>
</gene>
<sequence>MKFLAVLLAAGMLAFLGAVICIIASVPLAASPARALPGGTDNASAASAAGAPGPQRSLSALQGAGGSAGPSVLPGEPAASVFPPPPGPLLSRFLCTPLAAACPSGAEQGDAAGERAELLLLQSTAEQLRQTALQQEARIRADRDTIRELTGKLGRCESGLPRGLQDAGPRRDTMADGAWDSPALLVELENAVRALRDRIERIEQELPARGNLSSSAPAPAVPTALHSKMDELEGQLLAKVLALEKERAALSHGSHQQRQEVEKELDALQGRVAELEHGSSAYSPPDAFKVSIPIRNNYMYARVRKAVPELYAFTACMWLRSRSGGSGQGTPFSYSVPGQANEIVLLEAGLEPMELLINDKVAQLPLSLKDSNWHHICIAWTTRDGLWSAYQDGELRGSGENLAAWHPIKPHGILILGQEQDTLGGRFDATQAFVGDIAQFNLWDHALTPAQVLGIANCTGPLMGNVLPWEDKLVEAFGGAKKAAFDVCKRRAKA</sequence>
<feature type="chain" id="PRO_0000162508" description="Neuronal pentraxin receptor">
    <location>
        <begin position="1"/>
        <end position="494"/>
    </location>
</feature>
<feature type="topological domain" description="Cytoplasmic" evidence="2">
    <location>
        <begin position="1"/>
        <end position="2"/>
    </location>
</feature>
<feature type="transmembrane region" description="Helical; Signal-anchor for type II membrane protein" evidence="2">
    <location>
        <begin position="3"/>
        <end position="23"/>
    </location>
</feature>
<feature type="topological domain" description="Extracellular" evidence="2">
    <location>
        <begin position="24"/>
        <end position="494"/>
    </location>
</feature>
<feature type="domain" description="Pentraxin (PTX)" evidence="3">
    <location>
        <begin position="286"/>
        <end position="488"/>
    </location>
</feature>
<feature type="region of interest" description="Disordered" evidence="4">
    <location>
        <begin position="37"/>
        <end position="80"/>
    </location>
</feature>
<feature type="compositionally biased region" description="Low complexity" evidence="4">
    <location>
        <begin position="43"/>
        <end position="62"/>
    </location>
</feature>
<feature type="compositionally biased region" description="Low complexity" evidence="4">
    <location>
        <begin position="69"/>
        <end position="80"/>
    </location>
</feature>
<feature type="binding site" evidence="1">
    <location>
        <position position="341"/>
    </location>
    <ligand>
        <name>Ca(2+)</name>
        <dbReference type="ChEBI" id="CHEBI:29108"/>
        <label>1</label>
    </ligand>
</feature>
<feature type="binding site" evidence="1">
    <location>
        <position position="419"/>
    </location>
    <ligand>
        <name>Ca(2+)</name>
        <dbReference type="ChEBI" id="CHEBI:29108"/>
        <label>1</label>
    </ligand>
</feature>
<feature type="binding site" evidence="3">
    <location>
        <position position="419"/>
    </location>
    <ligand>
        <name>Ca(2+)</name>
        <dbReference type="ChEBI" id="CHEBI:29108"/>
        <label>2</label>
    </ligand>
</feature>
<feature type="binding site" evidence="1">
    <location>
        <position position="420"/>
    </location>
    <ligand>
        <name>Ca(2+)</name>
        <dbReference type="ChEBI" id="CHEBI:29108"/>
        <label>1</label>
    </ligand>
</feature>
<feature type="binding site" evidence="1">
    <location>
        <position position="421"/>
    </location>
    <ligand>
        <name>Ca(2+)</name>
        <dbReference type="ChEBI" id="CHEBI:29108"/>
        <label>1</label>
    </ligand>
</feature>
<feature type="binding site" evidence="3">
    <location>
        <position position="421"/>
    </location>
    <ligand>
        <name>Ca(2+)</name>
        <dbReference type="ChEBI" id="CHEBI:29108"/>
        <label>2</label>
    </ligand>
</feature>
<feature type="binding site" evidence="3">
    <location>
        <position position="431"/>
    </location>
    <ligand>
        <name>Ca(2+)</name>
        <dbReference type="ChEBI" id="CHEBI:29108"/>
        <label>2</label>
    </ligand>
</feature>
<feature type="glycosylation site" description="N-linked (GlcNAc...) asparagine" evidence="2">
    <location>
        <position position="42"/>
    </location>
</feature>
<feature type="glycosylation site" description="N-linked (GlcNAc...) asparagine" evidence="8">
    <location>
        <position position="211"/>
    </location>
</feature>
<feature type="glycosylation site" description="N-linked (GlcNAc...) asparagine" evidence="2">
    <location>
        <position position="457"/>
    </location>
</feature>
<feature type="disulfide bond" evidence="3">
    <location>
        <begin position="316"/>
        <end position="377"/>
    </location>
</feature>
<keyword id="KW-0106">Calcium</keyword>
<keyword id="KW-0903">Direct protein sequencing</keyword>
<keyword id="KW-1015">Disulfide bond</keyword>
<keyword id="KW-0325">Glycoprotein</keyword>
<keyword id="KW-0472">Membrane</keyword>
<keyword id="KW-0479">Metal-binding</keyword>
<keyword id="KW-0675">Receptor</keyword>
<keyword id="KW-1185">Reference proteome</keyword>
<keyword id="KW-0735">Signal-anchor</keyword>
<keyword id="KW-0812">Transmembrane</keyword>
<keyword id="KW-1133">Transmembrane helix</keyword>
<keyword id="KW-0832">Ubl conjugation</keyword>
<protein>
    <recommendedName>
        <fullName>Neuronal pentraxin receptor</fullName>
    </recommendedName>
</protein>
<accession>O35764</accession>
<name>NPTXR_RAT</name>